<proteinExistence type="inferred from homology"/>
<organism>
    <name type="scientific">Streptococcus sanguinis (strain SK36)</name>
    <dbReference type="NCBI Taxonomy" id="388919"/>
    <lineage>
        <taxon>Bacteria</taxon>
        <taxon>Bacillati</taxon>
        <taxon>Bacillota</taxon>
        <taxon>Bacilli</taxon>
        <taxon>Lactobacillales</taxon>
        <taxon>Streptococcaceae</taxon>
        <taxon>Streptococcus</taxon>
    </lineage>
</organism>
<reference key="1">
    <citation type="journal article" date="2007" name="J. Bacteriol.">
        <title>Genome of the opportunistic pathogen Streptococcus sanguinis.</title>
        <authorList>
            <person name="Xu P."/>
            <person name="Alves J.M."/>
            <person name="Kitten T."/>
            <person name="Brown A."/>
            <person name="Chen Z."/>
            <person name="Ozaki L.S."/>
            <person name="Manque P."/>
            <person name="Ge X."/>
            <person name="Serrano M.G."/>
            <person name="Puiu D."/>
            <person name="Hendricks S."/>
            <person name="Wang Y."/>
            <person name="Chaplin M.D."/>
            <person name="Akan D."/>
            <person name="Paik S."/>
            <person name="Peterson D.L."/>
            <person name="Macrina F.L."/>
            <person name="Buck G.A."/>
        </authorList>
    </citation>
    <scope>NUCLEOTIDE SEQUENCE [LARGE SCALE GENOMIC DNA]</scope>
    <source>
        <strain>SK36</strain>
    </source>
</reference>
<accession>A3CM02</accession>
<keyword id="KW-0067">ATP-binding</keyword>
<keyword id="KW-0119">Carbohydrate metabolism</keyword>
<keyword id="KW-0320">Glycogen biosynthesis</keyword>
<keyword id="KW-0321">Glycogen metabolism</keyword>
<keyword id="KW-0547">Nucleotide-binding</keyword>
<keyword id="KW-0548">Nucleotidyltransferase</keyword>
<keyword id="KW-1185">Reference proteome</keyword>
<keyword id="KW-0808">Transferase</keyword>
<feature type="chain" id="PRO_1000051589" description="Glucose-1-phosphate adenylyltransferase">
    <location>
        <begin position="1"/>
        <end position="380"/>
    </location>
</feature>
<feature type="binding site" evidence="1">
    <location>
        <position position="164"/>
    </location>
    <ligand>
        <name>alpha-D-glucose 1-phosphate</name>
        <dbReference type="ChEBI" id="CHEBI:58601"/>
    </ligand>
</feature>
<feature type="binding site" evidence="1">
    <location>
        <begin position="179"/>
        <end position="180"/>
    </location>
    <ligand>
        <name>alpha-D-glucose 1-phosphate</name>
        <dbReference type="ChEBI" id="CHEBI:58601"/>
    </ligand>
</feature>
<feature type="binding site" evidence="1">
    <location>
        <position position="190"/>
    </location>
    <ligand>
        <name>alpha-D-glucose 1-phosphate</name>
        <dbReference type="ChEBI" id="CHEBI:58601"/>
    </ligand>
</feature>
<comment type="function">
    <text evidence="1">Involved in the biosynthesis of ADP-glucose, a building block required for the elongation reactions to produce glycogen. Catalyzes the reaction between ATP and alpha-D-glucose 1-phosphate (G1P) to produce pyrophosphate and ADP-Glc.</text>
</comment>
<comment type="catalytic activity">
    <reaction evidence="1">
        <text>alpha-D-glucose 1-phosphate + ATP + H(+) = ADP-alpha-D-glucose + diphosphate</text>
        <dbReference type="Rhea" id="RHEA:12120"/>
        <dbReference type="ChEBI" id="CHEBI:15378"/>
        <dbReference type="ChEBI" id="CHEBI:30616"/>
        <dbReference type="ChEBI" id="CHEBI:33019"/>
        <dbReference type="ChEBI" id="CHEBI:57498"/>
        <dbReference type="ChEBI" id="CHEBI:58601"/>
        <dbReference type="EC" id="2.7.7.27"/>
    </reaction>
</comment>
<comment type="pathway">
    <text evidence="1">Glycan biosynthesis; glycogen biosynthesis.</text>
</comment>
<comment type="subunit">
    <text evidence="1">Homotetramer.</text>
</comment>
<comment type="similarity">
    <text evidence="1">Belongs to the bacterial/plant glucose-1-phosphate adenylyltransferase family.</text>
</comment>
<protein>
    <recommendedName>
        <fullName evidence="1">Glucose-1-phosphate adenylyltransferase</fullName>
        <ecNumber evidence="1">2.7.7.27</ecNumber>
    </recommendedName>
    <alternativeName>
        <fullName evidence="1">ADP-glucose pyrophosphorylase</fullName>
        <shortName evidence="1">ADPGlc PPase</shortName>
    </alternativeName>
    <alternativeName>
        <fullName evidence="1">ADP-glucose synthase</fullName>
    </alternativeName>
</protein>
<evidence type="ECO:0000255" key="1">
    <source>
        <dbReference type="HAMAP-Rule" id="MF_00624"/>
    </source>
</evidence>
<name>GLGC_STRSV</name>
<dbReference type="EC" id="2.7.7.27" evidence="1"/>
<dbReference type="EMBL" id="CP000387">
    <property type="protein sequence ID" value="ABN44207.1"/>
    <property type="molecule type" value="Genomic_DNA"/>
</dbReference>
<dbReference type="RefSeq" id="WP_002904142.1">
    <property type="nucleotide sequence ID" value="NZ_CAXTYR010000004.1"/>
</dbReference>
<dbReference type="RefSeq" id="YP_001034757.1">
    <property type="nucleotide sequence ID" value="NC_009009.1"/>
</dbReference>
<dbReference type="SMR" id="A3CM02"/>
<dbReference type="STRING" id="388919.SSA_0776"/>
<dbReference type="KEGG" id="ssa:SSA_0776"/>
<dbReference type="PATRIC" id="fig|388919.9.peg.742"/>
<dbReference type="eggNOG" id="COG0448">
    <property type="taxonomic scope" value="Bacteria"/>
</dbReference>
<dbReference type="HOGENOM" id="CLU_029499_14_0_9"/>
<dbReference type="OrthoDB" id="9801810at2"/>
<dbReference type="UniPathway" id="UPA00164"/>
<dbReference type="Proteomes" id="UP000002148">
    <property type="component" value="Chromosome"/>
</dbReference>
<dbReference type="GO" id="GO:0005524">
    <property type="term" value="F:ATP binding"/>
    <property type="evidence" value="ECO:0007669"/>
    <property type="project" value="UniProtKB-KW"/>
</dbReference>
<dbReference type="GO" id="GO:0008878">
    <property type="term" value="F:glucose-1-phosphate adenylyltransferase activity"/>
    <property type="evidence" value="ECO:0007669"/>
    <property type="project" value="UniProtKB-UniRule"/>
</dbReference>
<dbReference type="GO" id="GO:0005978">
    <property type="term" value="P:glycogen biosynthetic process"/>
    <property type="evidence" value="ECO:0007669"/>
    <property type="project" value="UniProtKB-UniRule"/>
</dbReference>
<dbReference type="CDD" id="cd02508">
    <property type="entry name" value="ADP_Glucose_PP"/>
    <property type="match status" value="1"/>
</dbReference>
<dbReference type="CDD" id="cd04651">
    <property type="entry name" value="LbH_G1P_AT_C"/>
    <property type="match status" value="1"/>
</dbReference>
<dbReference type="Gene3D" id="2.160.10.10">
    <property type="entry name" value="Hexapeptide repeat proteins"/>
    <property type="match status" value="1"/>
</dbReference>
<dbReference type="Gene3D" id="3.90.550.10">
    <property type="entry name" value="Spore Coat Polysaccharide Biosynthesis Protein SpsA, Chain A"/>
    <property type="match status" value="1"/>
</dbReference>
<dbReference type="HAMAP" id="MF_00624">
    <property type="entry name" value="GlgC"/>
    <property type="match status" value="1"/>
</dbReference>
<dbReference type="InterPro" id="IPR011831">
    <property type="entry name" value="ADP-Glc_PPase"/>
</dbReference>
<dbReference type="InterPro" id="IPR005836">
    <property type="entry name" value="ADP_Glu_pyroP_CS"/>
</dbReference>
<dbReference type="InterPro" id="IPR023049">
    <property type="entry name" value="GlgC_bac"/>
</dbReference>
<dbReference type="InterPro" id="IPR056818">
    <property type="entry name" value="GlmU/GlgC-like_hexapep"/>
</dbReference>
<dbReference type="InterPro" id="IPR005835">
    <property type="entry name" value="NTP_transferase_dom"/>
</dbReference>
<dbReference type="InterPro" id="IPR029044">
    <property type="entry name" value="Nucleotide-diphossugar_trans"/>
</dbReference>
<dbReference type="InterPro" id="IPR011004">
    <property type="entry name" value="Trimer_LpxA-like_sf"/>
</dbReference>
<dbReference type="NCBIfam" id="TIGR02091">
    <property type="entry name" value="glgC"/>
    <property type="match status" value="1"/>
</dbReference>
<dbReference type="NCBIfam" id="NF003670">
    <property type="entry name" value="PRK05293.1"/>
    <property type="match status" value="1"/>
</dbReference>
<dbReference type="PANTHER" id="PTHR43523:SF2">
    <property type="entry name" value="GLUCOSE-1-PHOSPHATE ADENYLYLTRANSFERASE"/>
    <property type="match status" value="1"/>
</dbReference>
<dbReference type="PANTHER" id="PTHR43523">
    <property type="entry name" value="GLUCOSE-1-PHOSPHATE ADENYLYLTRANSFERASE-RELATED"/>
    <property type="match status" value="1"/>
</dbReference>
<dbReference type="Pfam" id="PF24894">
    <property type="entry name" value="Hexapep_GlmU"/>
    <property type="match status" value="1"/>
</dbReference>
<dbReference type="Pfam" id="PF00483">
    <property type="entry name" value="NTP_transferase"/>
    <property type="match status" value="1"/>
</dbReference>
<dbReference type="SUPFAM" id="SSF53448">
    <property type="entry name" value="Nucleotide-diphospho-sugar transferases"/>
    <property type="match status" value="1"/>
</dbReference>
<dbReference type="SUPFAM" id="SSF51161">
    <property type="entry name" value="Trimeric LpxA-like enzymes"/>
    <property type="match status" value="1"/>
</dbReference>
<dbReference type="PROSITE" id="PS00808">
    <property type="entry name" value="ADP_GLC_PYROPHOSPH_1"/>
    <property type="match status" value="1"/>
</dbReference>
<dbReference type="PROSITE" id="PS00809">
    <property type="entry name" value="ADP_GLC_PYROPHOSPH_2"/>
    <property type="match status" value="1"/>
</dbReference>
<dbReference type="PROSITE" id="PS00810">
    <property type="entry name" value="ADP_GLC_PYROPHOSPH_3"/>
    <property type="match status" value="1"/>
</dbReference>
<gene>
    <name evidence="1" type="primary">glgC</name>
    <name type="ordered locus">SSA_0776</name>
</gene>
<sequence length="380" mass="41814">MKNEMLALILAGGQGTRLGKLTQSIAKPAVQFGGRYRIIDFALSNCANSGIHNVGVITQYQPLALNSHIGNGSSWGLDGINSGVSILQPYSASEGNRWFEGTSHAIYQNIDYIDSINPEYVLILSGDHIYKMDYDDMLQSHKDNNASLTVAVLDVPLKEASRFGIMNTDANNRIVEFEEKPENPKSTKASMGIYIFDWQRLRNMLVAAEKSNVDMSDFGKNVIPNYLESGESVYAYDFAGYWKDVGTVESLWEANMEYISPENALDSRNRRWKIYSRNLISPPNFISENSHVEDSLVVDGCFVDGTVKHSILSTGAQVKKGAVIEDSVIMSGAVIGKDAKIKRAIIGEGAIISDGVEIDGTEEVYVVGYNEKVGVPKDED</sequence>